<dbReference type="EC" id="2.7.4.25" evidence="1"/>
<dbReference type="EMBL" id="AM181176">
    <property type="protein sequence ID" value="CAY47897.1"/>
    <property type="molecule type" value="Genomic_DNA"/>
</dbReference>
<dbReference type="RefSeq" id="WP_012722932.1">
    <property type="nucleotide sequence ID" value="NC_012660.1"/>
</dbReference>
<dbReference type="SMR" id="C3K6J9"/>
<dbReference type="STRING" id="294.SRM1_04020"/>
<dbReference type="GeneID" id="93463334"/>
<dbReference type="eggNOG" id="COG0283">
    <property type="taxonomic scope" value="Bacteria"/>
</dbReference>
<dbReference type="HOGENOM" id="CLU_079959_2_0_6"/>
<dbReference type="OrthoDB" id="9807434at2"/>
<dbReference type="GO" id="GO:0005829">
    <property type="term" value="C:cytosol"/>
    <property type="evidence" value="ECO:0007669"/>
    <property type="project" value="TreeGrafter"/>
</dbReference>
<dbReference type="GO" id="GO:0005524">
    <property type="term" value="F:ATP binding"/>
    <property type="evidence" value="ECO:0007669"/>
    <property type="project" value="UniProtKB-UniRule"/>
</dbReference>
<dbReference type="GO" id="GO:0036430">
    <property type="term" value="F:CMP kinase activity"/>
    <property type="evidence" value="ECO:0007669"/>
    <property type="project" value="RHEA"/>
</dbReference>
<dbReference type="GO" id="GO:0036431">
    <property type="term" value="F:dCMP kinase activity"/>
    <property type="evidence" value="ECO:0007669"/>
    <property type="project" value="RHEA"/>
</dbReference>
<dbReference type="GO" id="GO:0015949">
    <property type="term" value="P:nucleobase-containing small molecule interconversion"/>
    <property type="evidence" value="ECO:0007669"/>
    <property type="project" value="TreeGrafter"/>
</dbReference>
<dbReference type="GO" id="GO:0006220">
    <property type="term" value="P:pyrimidine nucleotide metabolic process"/>
    <property type="evidence" value="ECO:0007669"/>
    <property type="project" value="UniProtKB-UniRule"/>
</dbReference>
<dbReference type="CDD" id="cd02020">
    <property type="entry name" value="CMPK"/>
    <property type="match status" value="1"/>
</dbReference>
<dbReference type="FunFam" id="3.40.50.300:FF:000262">
    <property type="entry name" value="Cytidylate kinase"/>
    <property type="match status" value="1"/>
</dbReference>
<dbReference type="Gene3D" id="3.40.50.300">
    <property type="entry name" value="P-loop containing nucleotide triphosphate hydrolases"/>
    <property type="match status" value="1"/>
</dbReference>
<dbReference type="HAMAP" id="MF_00238">
    <property type="entry name" value="Cytidyl_kinase_type1"/>
    <property type="match status" value="1"/>
</dbReference>
<dbReference type="InterPro" id="IPR003136">
    <property type="entry name" value="Cytidylate_kin"/>
</dbReference>
<dbReference type="InterPro" id="IPR011994">
    <property type="entry name" value="Cytidylate_kinase_dom"/>
</dbReference>
<dbReference type="InterPro" id="IPR027417">
    <property type="entry name" value="P-loop_NTPase"/>
</dbReference>
<dbReference type="NCBIfam" id="TIGR00017">
    <property type="entry name" value="cmk"/>
    <property type="match status" value="1"/>
</dbReference>
<dbReference type="PANTHER" id="PTHR21299:SF2">
    <property type="entry name" value="CYTIDYLATE KINASE"/>
    <property type="match status" value="1"/>
</dbReference>
<dbReference type="PANTHER" id="PTHR21299">
    <property type="entry name" value="CYTIDYLATE KINASE/PANTOATE-BETA-ALANINE LIGASE"/>
    <property type="match status" value="1"/>
</dbReference>
<dbReference type="Pfam" id="PF02224">
    <property type="entry name" value="Cytidylate_kin"/>
    <property type="match status" value="1"/>
</dbReference>
<dbReference type="SUPFAM" id="SSF52540">
    <property type="entry name" value="P-loop containing nucleoside triphosphate hydrolases"/>
    <property type="match status" value="1"/>
</dbReference>
<proteinExistence type="inferred from homology"/>
<evidence type="ECO:0000255" key="1">
    <source>
        <dbReference type="HAMAP-Rule" id="MF_00238"/>
    </source>
</evidence>
<name>KCY_PSEFS</name>
<keyword id="KW-0067">ATP-binding</keyword>
<keyword id="KW-0963">Cytoplasm</keyword>
<keyword id="KW-0418">Kinase</keyword>
<keyword id="KW-0547">Nucleotide-binding</keyword>
<keyword id="KW-0808">Transferase</keyword>
<feature type="chain" id="PRO_1000204456" description="Cytidylate kinase">
    <location>
        <begin position="1"/>
        <end position="229"/>
    </location>
</feature>
<feature type="binding site" evidence="1">
    <location>
        <begin position="12"/>
        <end position="20"/>
    </location>
    <ligand>
        <name>ATP</name>
        <dbReference type="ChEBI" id="CHEBI:30616"/>
    </ligand>
</feature>
<comment type="catalytic activity">
    <reaction evidence="1">
        <text>CMP + ATP = CDP + ADP</text>
        <dbReference type="Rhea" id="RHEA:11600"/>
        <dbReference type="ChEBI" id="CHEBI:30616"/>
        <dbReference type="ChEBI" id="CHEBI:58069"/>
        <dbReference type="ChEBI" id="CHEBI:60377"/>
        <dbReference type="ChEBI" id="CHEBI:456216"/>
        <dbReference type="EC" id="2.7.4.25"/>
    </reaction>
</comment>
<comment type="catalytic activity">
    <reaction evidence="1">
        <text>dCMP + ATP = dCDP + ADP</text>
        <dbReference type="Rhea" id="RHEA:25094"/>
        <dbReference type="ChEBI" id="CHEBI:30616"/>
        <dbReference type="ChEBI" id="CHEBI:57566"/>
        <dbReference type="ChEBI" id="CHEBI:58593"/>
        <dbReference type="ChEBI" id="CHEBI:456216"/>
        <dbReference type="EC" id="2.7.4.25"/>
    </reaction>
</comment>
<comment type="subcellular location">
    <subcellularLocation>
        <location evidence="1">Cytoplasm</location>
    </subcellularLocation>
</comment>
<comment type="similarity">
    <text evidence="1">Belongs to the cytidylate kinase family. Type 1 subfamily.</text>
</comment>
<reference key="1">
    <citation type="journal article" date="2009" name="Genome Biol.">
        <title>Genomic and genetic analyses of diversity and plant interactions of Pseudomonas fluorescens.</title>
        <authorList>
            <person name="Silby M.W."/>
            <person name="Cerdeno-Tarraga A.M."/>
            <person name="Vernikos G.S."/>
            <person name="Giddens S.R."/>
            <person name="Jackson R.W."/>
            <person name="Preston G.M."/>
            <person name="Zhang X.-X."/>
            <person name="Moon C.D."/>
            <person name="Gehrig S.M."/>
            <person name="Godfrey S.A.C."/>
            <person name="Knight C.G."/>
            <person name="Malone J.G."/>
            <person name="Robinson Z."/>
            <person name="Spiers A.J."/>
            <person name="Harris S."/>
            <person name="Challis G.L."/>
            <person name="Yaxley A.M."/>
            <person name="Harris D."/>
            <person name="Seeger K."/>
            <person name="Murphy L."/>
            <person name="Rutter S."/>
            <person name="Squares R."/>
            <person name="Quail M.A."/>
            <person name="Saunders E."/>
            <person name="Mavromatis K."/>
            <person name="Brettin T.S."/>
            <person name="Bentley S.D."/>
            <person name="Hothersall J."/>
            <person name="Stephens E."/>
            <person name="Thomas C.M."/>
            <person name="Parkhill J."/>
            <person name="Levy S.B."/>
            <person name="Rainey P.B."/>
            <person name="Thomson N.R."/>
        </authorList>
    </citation>
    <scope>NUCLEOTIDE SEQUENCE [LARGE SCALE GENOMIC DNA]</scope>
    <source>
        <strain>SBW25</strain>
    </source>
</reference>
<organism>
    <name type="scientific">Pseudomonas fluorescens (strain SBW25)</name>
    <dbReference type="NCBI Taxonomy" id="216595"/>
    <lineage>
        <taxon>Bacteria</taxon>
        <taxon>Pseudomonadati</taxon>
        <taxon>Pseudomonadota</taxon>
        <taxon>Gammaproteobacteria</taxon>
        <taxon>Pseudomonadales</taxon>
        <taxon>Pseudomonadaceae</taxon>
        <taxon>Pseudomonas</taxon>
    </lineage>
</organism>
<gene>
    <name evidence="1" type="primary">cmk</name>
    <name type="ordered locus">PFLU_1648</name>
</gene>
<accession>C3K6J9</accession>
<sequence>MNIKAPVITIDGPSGSGKGTIAGILAKRLGWCLLDSGALYRLLAFAARNHGVDLTNEESLKLLAAHLDVQFVGATEGHPQRIILEGDDVTDDLRNEQVGSWASQVAALPAVRDALLQRQRAFQEPPGLVADGRDMGTVVFPEAPLKIFLTASAEERARRRYLQLKGKVDGVSLSSLLDEIRARDERDTQRAVAPLKPAADAIQLDSTELSIEQVLERIMSEIAIRDIAG</sequence>
<protein>
    <recommendedName>
        <fullName evidence="1">Cytidylate kinase</fullName>
        <shortName evidence="1">CK</shortName>
        <ecNumber evidence="1">2.7.4.25</ecNumber>
    </recommendedName>
    <alternativeName>
        <fullName evidence="1">Cytidine monophosphate kinase</fullName>
        <shortName evidence="1">CMP kinase</shortName>
    </alternativeName>
</protein>